<comment type="function">
    <text evidence="1">This protein is involved in the repair of mismatches in DNA. It is possible that it carries out the mismatch recognition step. This protein has a weak ATPase activity.</text>
</comment>
<comment type="similarity">
    <text evidence="1">Belongs to the DNA mismatch repair MutS family.</text>
</comment>
<dbReference type="EMBL" id="CP000141">
    <property type="protein sequence ID" value="ABB14144.1"/>
    <property type="molecule type" value="Genomic_DNA"/>
</dbReference>
<dbReference type="RefSeq" id="WP_011344304.1">
    <property type="nucleotide sequence ID" value="NC_007503.1"/>
</dbReference>
<dbReference type="SMR" id="Q3ACA5"/>
<dbReference type="FunCoup" id="Q3ACA5">
    <property type="interactions" value="362"/>
</dbReference>
<dbReference type="STRING" id="246194.CHY_1397"/>
<dbReference type="KEGG" id="chy:CHY_1397"/>
<dbReference type="eggNOG" id="COG0249">
    <property type="taxonomic scope" value="Bacteria"/>
</dbReference>
<dbReference type="HOGENOM" id="CLU_002472_4_0_9"/>
<dbReference type="InParanoid" id="Q3ACA5"/>
<dbReference type="OrthoDB" id="9802448at2"/>
<dbReference type="Proteomes" id="UP000002706">
    <property type="component" value="Chromosome"/>
</dbReference>
<dbReference type="GO" id="GO:0005829">
    <property type="term" value="C:cytosol"/>
    <property type="evidence" value="ECO:0007669"/>
    <property type="project" value="TreeGrafter"/>
</dbReference>
<dbReference type="GO" id="GO:0005524">
    <property type="term" value="F:ATP binding"/>
    <property type="evidence" value="ECO:0007669"/>
    <property type="project" value="UniProtKB-UniRule"/>
</dbReference>
<dbReference type="GO" id="GO:0140664">
    <property type="term" value="F:ATP-dependent DNA damage sensor activity"/>
    <property type="evidence" value="ECO:0007669"/>
    <property type="project" value="InterPro"/>
</dbReference>
<dbReference type="GO" id="GO:0003684">
    <property type="term" value="F:damaged DNA binding"/>
    <property type="evidence" value="ECO:0007669"/>
    <property type="project" value="UniProtKB-UniRule"/>
</dbReference>
<dbReference type="GO" id="GO:0030983">
    <property type="term" value="F:mismatched DNA binding"/>
    <property type="evidence" value="ECO:0007669"/>
    <property type="project" value="InterPro"/>
</dbReference>
<dbReference type="GO" id="GO:0006298">
    <property type="term" value="P:mismatch repair"/>
    <property type="evidence" value="ECO:0007669"/>
    <property type="project" value="UniProtKB-UniRule"/>
</dbReference>
<dbReference type="CDD" id="cd03284">
    <property type="entry name" value="ABC_MutS1"/>
    <property type="match status" value="1"/>
</dbReference>
<dbReference type="FunFam" id="1.10.1420.10:FF:000007">
    <property type="entry name" value="DNA mismatch repair protein MutS"/>
    <property type="match status" value="1"/>
</dbReference>
<dbReference type="FunFam" id="3.40.1170.10:FF:000001">
    <property type="entry name" value="DNA mismatch repair protein MutS"/>
    <property type="match status" value="1"/>
</dbReference>
<dbReference type="FunFam" id="3.40.50.300:FF:000870">
    <property type="entry name" value="MutS protein homolog 4"/>
    <property type="match status" value="1"/>
</dbReference>
<dbReference type="Gene3D" id="1.10.1420.10">
    <property type="match status" value="2"/>
</dbReference>
<dbReference type="Gene3D" id="3.40.1170.10">
    <property type="entry name" value="DNA repair protein MutS, domain I"/>
    <property type="match status" value="1"/>
</dbReference>
<dbReference type="Gene3D" id="3.30.420.110">
    <property type="entry name" value="MutS, connector domain"/>
    <property type="match status" value="1"/>
</dbReference>
<dbReference type="Gene3D" id="3.40.50.300">
    <property type="entry name" value="P-loop containing nucleotide triphosphate hydrolases"/>
    <property type="match status" value="1"/>
</dbReference>
<dbReference type="HAMAP" id="MF_00096">
    <property type="entry name" value="MutS"/>
    <property type="match status" value="1"/>
</dbReference>
<dbReference type="InterPro" id="IPR005748">
    <property type="entry name" value="DNA_mismatch_repair_MutS"/>
</dbReference>
<dbReference type="InterPro" id="IPR007695">
    <property type="entry name" value="DNA_mismatch_repair_MutS-lik_N"/>
</dbReference>
<dbReference type="InterPro" id="IPR017261">
    <property type="entry name" value="DNA_mismatch_repair_MutS/MSH"/>
</dbReference>
<dbReference type="InterPro" id="IPR000432">
    <property type="entry name" value="DNA_mismatch_repair_MutS_C"/>
</dbReference>
<dbReference type="InterPro" id="IPR007861">
    <property type="entry name" value="DNA_mismatch_repair_MutS_clamp"/>
</dbReference>
<dbReference type="InterPro" id="IPR007696">
    <property type="entry name" value="DNA_mismatch_repair_MutS_core"/>
</dbReference>
<dbReference type="InterPro" id="IPR016151">
    <property type="entry name" value="DNA_mismatch_repair_MutS_N"/>
</dbReference>
<dbReference type="InterPro" id="IPR036187">
    <property type="entry name" value="DNA_mismatch_repair_MutS_sf"/>
</dbReference>
<dbReference type="InterPro" id="IPR007860">
    <property type="entry name" value="DNA_mmatch_repair_MutS_con_dom"/>
</dbReference>
<dbReference type="InterPro" id="IPR045076">
    <property type="entry name" value="MutS"/>
</dbReference>
<dbReference type="InterPro" id="IPR036678">
    <property type="entry name" value="MutS_con_dom_sf"/>
</dbReference>
<dbReference type="InterPro" id="IPR027417">
    <property type="entry name" value="P-loop_NTPase"/>
</dbReference>
<dbReference type="NCBIfam" id="TIGR01070">
    <property type="entry name" value="mutS1"/>
    <property type="match status" value="1"/>
</dbReference>
<dbReference type="NCBIfam" id="NF003810">
    <property type="entry name" value="PRK05399.1"/>
    <property type="match status" value="1"/>
</dbReference>
<dbReference type="PANTHER" id="PTHR11361:SF34">
    <property type="entry name" value="DNA MISMATCH REPAIR PROTEIN MSH1, MITOCHONDRIAL"/>
    <property type="match status" value="1"/>
</dbReference>
<dbReference type="PANTHER" id="PTHR11361">
    <property type="entry name" value="DNA MISMATCH REPAIR PROTEIN MUTS FAMILY MEMBER"/>
    <property type="match status" value="1"/>
</dbReference>
<dbReference type="Pfam" id="PF01624">
    <property type="entry name" value="MutS_I"/>
    <property type="match status" value="1"/>
</dbReference>
<dbReference type="Pfam" id="PF05188">
    <property type="entry name" value="MutS_II"/>
    <property type="match status" value="1"/>
</dbReference>
<dbReference type="Pfam" id="PF05192">
    <property type="entry name" value="MutS_III"/>
    <property type="match status" value="1"/>
</dbReference>
<dbReference type="Pfam" id="PF05190">
    <property type="entry name" value="MutS_IV"/>
    <property type="match status" value="1"/>
</dbReference>
<dbReference type="Pfam" id="PF00488">
    <property type="entry name" value="MutS_V"/>
    <property type="match status" value="1"/>
</dbReference>
<dbReference type="PIRSF" id="PIRSF037677">
    <property type="entry name" value="DNA_mis_repair_Msh6"/>
    <property type="match status" value="1"/>
</dbReference>
<dbReference type="SMART" id="SM00534">
    <property type="entry name" value="MUTSac"/>
    <property type="match status" value="1"/>
</dbReference>
<dbReference type="SMART" id="SM00533">
    <property type="entry name" value="MUTSd"/>
    <property type="match status" value="1"/>
</dbReference>
<dbReference type="SUPFAM" id="SSF55271">
    <property type="entry name" value="DNA repair protein MutS, domain I"/>
    <property type="match status" value="1"/>
</dbReference>
<dbReference type="SUPFAM" id="SSF53150">
    <property type="entry name" value="DNA repair protein MutS, domain II"/>
    <property type="match status" value="1"/>
</dbReference>
<dbReference type="SUPFAM" id="SSF48334">
    <property type="entry name" value="DNA repair protein MutS, domain III"/>
    <property type="match status" value="1"/>
</dbReference>
<dbReference type="SUPFAM" id="SSF52540">
    <property type="entry name" value="P-loop containing nucleoside triphosphate hydrolases"/>
    <property type="match status" value="1"/>
</dbReference>
<dbReference type="PROSITE" id="PS00486">
    <property type="entry name" value="DNA_MISMATCH_REPAIR_2"/>
    <property type="match status" value="1"/>
</dbReference>
<keyword id="KW-0067">ATP-binding</keyword>
<keyword id="KW-0227">DNA damage</keyword>
<keyword id="KW-0234">DNA repair</keyword>
<keyword id="KW-0238">DNA-binding</keyword>
<keyword id="KW-0547">Nucleotide-binding</keyword>
<keyword id="KW-1185">Reference proteome</keyword>
<gene>
    <name evidence="1" type="primary">mutS</name>
    <name type="ordered locus">CHY_1397</name>
</gene>
<sequence length="841" mass="95443">MSFTPMMKQYLDIKKQYSDCLLFFRLGDFYELFFEDAVIASRELEIVLTGRDAGQEERVPMCGVPYHSAQGYIAKLLSRGYKVAICEQVEDPKKAKGLVKREVTKIYTPGTVTEEFFLQEKTNNYIIALAEKDGLIALAVAEVSTGYLGITSVDEGKIEVLASEIRRLAPTEAVVLKNFKNNFLLKDITGIVNYLEKLPAEEIEIAFKGPEASKEAYKILISYLKRIEPAVLSIFGQPEFYQIDSYLYFDESTRKNLEILRNREDNSSSLLGIIDFTQTAMGARKLKEELTKPLLNLKAIADRLDAVEILVNDYELRENLRENLKNLYDLERLSIKLVCGTINPKDLIKIKQSLPQIWHIKNSINHVKNKSVLFAEIYKNLPEMREVYNLIDKSIVDDPPVSPKDGGIIKNGYNPTVDEYRKAREEGQDWIINYEKKERERTGIKSLKVNYNKVFGYFIEVTKANLHLVPADYQRKQTMVNAERFITEELKHYENLILGASEKLANLEYELFCEIRSEILKYQEDLKRAASAVALLDFLISLAVAAIEYDFTRPVITAEPVLEIKNGRHPVVEKSVGRANFVPNDLYLDTKENSLLLITGPNMAGKSTYMRQAALIVILAQIGSFVPAEYARVGLVDKILTRIGATDDLAKGQSTFMVEMIECNNILRNATSRSLILLDEVGRGTSTYDGISIAEAIIEYIQKKIKARTLFSTHYHELTGLEGEIPGVKNFTVLVQEKGEEVKFLHKVVPGKTDKSYGIYVAKLAGLPREVVERAYEILARFEDKGLKVKDTVPVQLSLFEEKPEPSGVIKELIELDLIRMTPLEALNKLYELRQKALGEK</sequence>
<evidence type="ECO:0000255" key="1">
    <source>
        <dbReference type="HAMAP-Rule" id="MF_00096"/>
    </source>
</evidence>
<name>MUTS_CARHZ</name>
<reference key="1">
    <citation type="journal article" date="2005" name="PLoS Genet.">
        <title>Life in hot carbon monoxide: the complete genome sequence of Carboxydothermus hydrogenoformans Z-2901.</title>
        <authorList>
            <person name="Wu M."/>
            <person name="Ren Q."/>
            <person name="Durkin A.S."/>
            <person name="Daugherty S.C."/>
            <person name="Brinkac L.M."/>
            <person name="Dodson R.J."/>
            <person name="Madupu R."/>
            <person name="Sullivan S.A."/>
            <person name="Kolonay J.F."/>
            <person name="Nelson W.C."/>
            <person name="Tallon L.J."/>
            <person name="Jones K.M."/>
            <person name="Ulrich L.E."/>
            <person name="Gonzalez J.M."/>
            <person name="Zhulin I.B."/>
            <person name="Robb F.T."/>
            <person name="Eisen J.A."/>
        </authorList>
    </citation>
    <scope>NUCLEOTIDE SEQUENCE [LARGE SCALE GENOMIC DNA]</scope>
    <source>
        <strain>ATCC BAA-161 / DSM 6008 / Z-2901</strain>
    </source>
</reference>
<accession>Q3ACA5</accession>
<proteinExistence type="inferred from homology"/>
<feature type="chain" id="PRO_0000224359" description="DNA mismatch repair protein MutS">
    <location>
        <begin position="1"/>
        <end position="841"/>
    </location>
</feature>
<feature type="binding site" evidence="1">
    <location>
        <begin position="600"/>
        <end position="607"/>
    </location>
    <ligand>
        <name>ATP</name>
        <dbReference type="ChEBI" id="CHEBI:30616"/>
    </ligand>
</feature>
<organism>
    <name type="scientific">Carboxydothermus hydrogenoformans (strain ATCC BAA-161 / DSM 6008 / Z-2901)</name>
    <dbReference type="NCBI Taxonomy" id="246194"/>
    <lineage>
        <taxon>Bacteria</taxon>
        <taxon>Bacillati</taxon>
        <taxon>Bacillota</taxon>
        <taxon>Clostridia</taxon>
        <taxon>Thermoanaerobacterales</taxon>
        <taxon>Thermoanaerobacteraceae</taxon>
        <taxon>Carboxydothermus</taxon>
    </lineage>
</organism>
<protein>
    <recommendedName>
        <fullName evidence="1">DNA mismatch repair protein MutS</fullName>
    </recommendedName>
</protein>